<sequence length="622" mass="71991">MRKLYCVLLLSAFEFTYMINFGRGQNYWEHPYQKSDVYHPINEHREHSKEYEYPLHQEHTYQQEDSGEDENTLQHAYPIDHEGAEPAPQEQNLFSSIEIVERSNYMGNPWTEYMAKYDIKEVHGSGIRVDLGEDAEVAGTQYRLPSGKCPVFGKGIIIENSNTTFLKPVATGNQDLKDGGFAFPPTNPLISPMTLDHMRDFYKNNEYVKNLDELTLCSRHAGNMNPDNDKNSNYKYPAVYDYNDKKCHILYIAAQENNGPRYCNKDESKRNSMFCFRPAKDKSFQNYTYLSKNVVDNWEKVCPRKNLENAKFGLWVDGNCEDIPHVNEFSANDLFECNKLVFELSASDQPKQYEQHLTDYEKIKEGFKNKNASMIKSAFLPTGAFKADRYKSRGKGYNWGNYNRKTQKCEIFNVKPTCLINNSSYIATTALSHPNEVEHNFPCSLYKDEIKKEIERESKRIKLNDNDDEGNKKIIAPRIFISDDIDSLKCPCDPEIVSNSTCNFFVCKCVEKRAEVTSNNEVVVKEEYKDEYADIPEHKPTYDKMKIIIASSAAVAVLATILMVYLYKRKGNAEKYDKMDEPQDYGKSNSRNDEMLDPEASFWGEEKRASHTTPVLMEKPYY</sequence>
<feature type="signal peptide" evidence="2">
    <location>
        <begin position="1"/>
        <end position="24"/>
    </location>
</feature>
<feature type="chain" id="PRO_0000024614" description="Apical membrane antigen 1">
    <location>
        <begin position="25"/>
        <end position="622"/>
    </location>
</feature>
<feature type="topological domain" description="Extracellular" evidence="2">
    <location>
        <begin position="25"/>
        <end position="546"/>
    </location>
</feature>
<feature type="transmembrane region" description="Helical" evidence="2">
    <location>
        <begin position="547"/>
        <end position="567"/>
    </location>
</feature>
<feature type="topological domain" description="Cytoplasmic" evidence="2">
    <location>
        <begin position="568"/>
        <end position="622"/>
    </location>
</feature>
<feature type="region of interest" description="Disordered" evidence="3">
    <location>
        <begin position="577"/>
        <end position="607"/>
    </location>
</feature>
<feature type="glycosylation site" description="N-linked (GlcNAc...) asparagine" evidence="2">
    <location>
        <position position="162"/>
    </location>
</feature>
<feature type="glycosylation site" description="N-linked (GlcNAc...) asparagine" evidence="2">
    <location>
        <position position="286"/>
    </location>
</feature>
<feature type="glycosylation site" description="N-linked (GlcNAc...) asparagine" evidence="2">
    <location>
        <position position="371"/>
    </location>
</feature>
<feature type="glycosylation site" description="N-linked (GlcNAc...) asparagine" evidence="2">
    <location>
        <position position="421"/>
    </location>
</feature>
<feature type="glycosylation site" description="N-linked (GlcNAc...) asparagine" evidence="2">
    <location>
        <position position="422"/>
    </location>
</feature>
<feature type="glycosylation site" description="N-linked (GlcNAc...) asparagine" evidence="2">
    <location>
        <position position="499"/>
    </location>
</feature>
<feature type="disulfide bond" evidence="1">
    <location>
        <begin position="149"/>
        <end position="302"/>
    </location>
</feature>
<feature type="disulfide bond" evidence="1">
    <location>
        <begin position="217"/>
        <end position="247"/>
    </location>
</feature>
<feature type="disulfide bond" evidence="1">
    <location>
        <begin position="263"/>
        <end position="275"/>
    </location>
</feature>
<feature type="disulfide bond" evidence="1">
    <location>
        <begin position="320"/>
        <end position="418"/>
    </location>
</feature>
<feature type="disulfide bond" evidence="1">
    <location>
        <begin position="337"/>
        <end position="409"/>
    </location>
</feature>
<feature type="disulfide bond" evidence="1">
    <location>
        <begin position="443"/>
        <end position="502"/>
    </location>
</feature>
<feature type="disulfide bond" evidence="1">
    <location>
        <begin position="490"/>
        <end position="507"/>
    </location>
</feature>
<feature type="disulfide bond" evidence="1">
    <location>
        <begin position="492"/>
        <end position="509"/>
    </location>
</feature>
<protein>
    <recommendedName>
        <fullName>Apical membrane antigen 1</fullName>
    </recommendedName>
    <alternativeName>
        <fullName>Merozoite surface antigen</fullName>
    </alternativeName>
</protein>
<keyword id="KW-1015">Disulfide bond</keyword>
<keyword id="KW-0325">Glycoprotein</keyword>
<keyword id="KW-0461">Malaria</keyword>
<keyword id="KW-0472">Membrane</keyword>
<keyword id="KW-0732">Signal</keyword>
<keyword id="KW-0812">Transmembrane</keyword>
<keyword id="KW-1133">Transmembrane helix</keyword>
<proteinExistence type="inferred from homology"/>
<dbReference type="EMBL" id="M58548">
    <property type="protein sequence ID" value="AAA29721.1"/>
    <property type="molecule type" value="Genomic_DNA"/>
</dbReference>
<dbReference type="BMRB" id="P50492"/>
<dbReference type="SMR" id="P50492"/>
<dbReference type="GlyCosmos" id="P50492">
    <property type="glycosylation" value="6 sites, No reported glycans"/>
</dbReference>
<dbReference type="ABCD" id="P50492">
    <property type="antibodies" value="12 sequenced antibodies"/>
</dbReference>
<dbReference type="GO" id="GO:0016020">
    <property type="term" value="C:membrane"/>
    <property type="evidence" value="ECO:0007669"/>
    <property type="project" value="UniProtKB-SubCell"/>
</dbReference>
<dbReference type="FunFam" id="4.10.1010.10:FF:000001">
    <property type="entry name" value="Apical membrane antigen 1"/>
    <property type="match status" value="1"/>
</dbReference>
<dbReference type="Gene3D" id="6.10.250.430">
    <property type="match status" value="1"/>
</dbReference>
<dbReference type="Gene3D" id="4.10.1010.10">
    <property type="entry name" value="Apical membrane antigen 1"/>
    <property type="match status" value="1"/>
</dbReference>
<dbReference type="Gene3D" id="3.50.4.10">
    <property type="entry name" value="Hepatocyte Growth Factor"/>
    <property type="match status" value="2"/>
</dbReference>
<dbReference type="InterPro" id="IPR003298">
    <property type="entry name" value="Apmem_Ag1"/>
</dbReference>
<dbReference type="InterPro" id="IPR024056">
    <property type="entry name" value="Apmem_Ag1_dom_sf"/>
</dbReference>
<dbReference type="Pfam" id="PF02430">
    <property type="entry name" value="AMA-1"/>
    <property type="match status" value="1"/>
</dbReference>
<dbReference type="PRINTS" id="PR01361">
    <property type="entry name" value="MEROZOITESA"/>
</dbReference>
<dbReference type="SMART" id="SM00815">
    <property type="entry name" value="AMA-1"/>
    <property type="match status" value="1"/>
</dbReference>
<dbReference type="SUPFAM" id="SSF82910">
    <property type="entry name" value="Apical membrane antigen 1"/>
    <property type="match status" value="1"/>
</dbReference>
<evidence type="ECO:0000250" key="1"/>
<evidence type="ECO:0000255" key="2"/>
<evidence type="ECO:0000256" key="3">
    <source>
        <dbReference type="SAM" id="MobiDB-lite"/>
    </source>
</evidence>
<evidence type="ECO:0000305" key="4"/>
<organism>
    <name type="scientific">Plasmodium falciparum (isolate 7G8)</name>
    <dbReference type="NCBI Taxonomy" id="57266"/>
    <lineage>
        <taxon>Eukaryota</taxon>
        <taxon>Sar</taxon>
        <taxon>Alveolata</taxon>
        <taxon>Apicomplexa</taxon>
        <taxon>Aconoidasida</taxon>
        <taxon>Haemosporida</taxon>
        <taxon>Plasmodiidae</taxon>
        <taxon>Plasmodium</taxon>
        <taxon>Plasmodium (Laverania)</taxon>
    </lineage>
</organism>
<name>AMA1_PLAF8</name>
<reference key="1">
    <citation type="journal article" date="1990" name="Mol. Biochem. Parasitol.">
        <title>Analysis of variation in PF83, an erythrocytic merozoite vaccine candidate antigen of Plasmodium falciparum.</title>
        <authorList>
            <person name="Thomas A.W."/>
            <person name="Waters A.P."/>
            <person name="Carr D."/>
        </authorList>
    </citation>
    <scope>NUCLEOTIDE SEQUENCE [GENOMIC DNA]</scope>
</reference>
<gene>
    <name type="primary">AMA-1</name>
    <name type="synonym">PF83</name>
</gene>
<comment type="function">
    <text>Involved in parasite invasion of erythrocytes.</text>
</comment>
<comment type="subcellular location">
    <subcellularLocation>
        <location>Membrane</location>
        <topology>Single-pass type I membrane protein</topology>
    </subcellularLocation>
</comment>
<comment type="similarity">
    <text evidence="4">Belongs to the apicomplexan parasites AMA1 family.</text>
</comment>
<accession>P50492</accession>